<organism>
    <name type="scientific">Shigella dysenteriae serotype 1 (strain Sd197)</name>
    <dbReference type="NCBI Taxonomy" id="300267"/>
    <lineage>
        <taxon>Bacteria</taxon>
        <taxon>Pseudomonadati</taxon>
        <taxon>Pseudomonadota</taxon>
        <taxon>Gammaproteobacteria</taxon>
        <taxon>Enterobacterales</taxon>
        <taxon>Enterobacteriaceae</taxon>
        <taxon>Shigella</taxon>
    </lineage>
</organism>
<reference key="1">
    <citation type="journal article" date="2005" name="Nucleic Acids Res.">
        <title>Genome dynamics and diversity of Shigella species, the etiologic agents of bacillary dysentery.</title>
        <authorList>
            <person name="Yang F."/>
            <person name="Yang J."/>
            <person name="Zhang X."/>
            <person name="Chen L."/>
            <person name="Jiang Y."/>
            <person name="Yan Y."/>
            <person name="Tang X."/>
            <person name="Wang J."/>
            <person name="Xiong Z."/>
            <person name="Dong J."/>
            <person name="Xue Y."/>
            <person name="Zhu Y."/>
            <person name="Xu X."/>
            <person name="Sun L."/>
            <person name="Chen S."/>
            <person name="Nie H."/>
            <person name="Peng J."/>
            <person name="Xu J."/>
            <person name="Wang Y."/>
            <person name="Yuan Z."/>
            <person name="Wen Y."/>
            <person name="Yao Z."/>
            <person name="Shen Y."/>
            <person name="Qiang B."/>
            <person name="Hou Y."/>
            <person name="Yu J."/>
            <person name="Jin Q."/>
        </authorList>
    </citation>
    <scope>NUCLEOTIDE SEQUENCE [LARGE SCALE GENOMIC DNA]</scope>
    <source>
        <strain>Sd197</strain>
    </source>
</reference>
<accession>Q32I85</accession>
<evidence type="ECO:0000255" key="1">
    <source>
        <dbReference type="HAMAP-Rule" id="MF_01848"/>
    </source>
</evidence>
<evidence type="ECO:0000305" key="2"/>
<name>RLMF_SHIDS</name>
<feature type="chain" id="PRO_0000349969" description="Ribosomal RNA large subunit methyltransferase F">
    <location>
        <begin position="1"/>
        <end position="308"/>
    </location>
</feature>
<keyword id="KW-0963">Cytoplasm</keyword>
<keyword id="KW-0489">Methyltransferase</keyword>
<keyword id="KW-1185">Reference proteome</keyword>
<keyword id="KW-0698">rRNA processing</keyword>
<keyword id="KW-0949">S-adenosyl-L-methionine</keyword>
<keyword id="KW-0808">Transferase</keyword>
<proteinExistence type="inferred from homology"/>
<comment type="function">
    <text evidence="1">Specifically methylates the adenine in position 1618 of 23S rRNA.</text>
</comment>
<comment type="catalytic activity">
    <reaction evidence="1">
        <text>adenosine(1618) in 23S rRNA + S-adenosyl-L-methionine = N(6)-methyladenosine(1618) in 23S rRNA + S-adenosyl-L-homocysteine + H(+)</text>
        <dbReference type="Rhea" id="RHEA:16497"/>
        <dbReference type="Rhea" id="RHEA-COMP:10229"/>
        <dbReference type="Rhea" id="RHEA-COMP:10231"/>
        <dbReference type="ChEBI" id="CHEBI:15378"/>
        <dbReference type="ChEBI" id="CHEBI:57856"/>
        <dbReference type="ChEBI" id="CHEBI:59789"/>
        <dbReference type="ChEBI" id="CHEBI:74411"/>
        <dbReference type="ChEBI" id="CHEBI:74449"/>
        <dbReference type="EC" id="2.1.1.181"/>
    </reaction>
</comment>
<comment type="subcellular location">
    <subcellularLocation>
        <location evidence="1">Cytoplasm</location>
    </subcellularLocation>
</comment>
<comment type="similarity">
    <text evidence="1">Belongs to the methyltransferase superfamily. METTL16/RlmF family.</text>
</comment>
<comment type="sequence caution" evidence="2">
    <conflict type="erroneous initiation">
        <sequence resource="EMBL-CDS" id="ABB60972"/>
    </conflict>
</comment>
<dbReference type="EC" id="2.1.1.181" evidence="1"/>
<dbReference type="EMBL" id="CP000034">
    <property type="protein sequence ID" value="ABB60972.1"/>
    <property type="status" value="ALT_INIT"/>
    <property type="molecule type" value="Genomic_DNA"/>
</dbReference>
<dbReference type="RefSeq" id="WP_024262959.1">
    <property type="nucleotide sequence ID" value="NC_007606.1"/>
</dbReference>
<dbReference type="RefSeq" id="YP_402461.1">
    <property type="nucleotide sequence ID" value="NC_007606.1"/>
</dbReference>
<dbReference type="SMR" id="Q32I85"/>
<dbReference type="STRING" id="300267.SDY_0790"/>
<dbReference type="EnsemblBacteria" id="ABB60972">
    <property type="protein sequence ID" value="ABB60972"/>
    <property type="gene ID" value="SDY_0790"/>
</dbReference>
<dbReference type="KEGG" id="sdy:SDY_0790"/>
<dbReference type="PATRIC" id="fig|300267.13.peg.913"/>
<dbReference type="HOGENOM" id="CLU_027534_3_0_6"/>
<dbReference type="Proteomes" id="UP000002716">
    <property type="component" value="Chromosome"/>
</dbReference>
<dbReference type="GO" id="GO:0005737">
    <property type="term" value="C:cytoplasm"/>
    <property type="evidence" value="ECO:0007669"/>
    <property type="project" value="UniProtKB-SubCell"/>
</dbReference>
<dbReference type="GO" id="GO:0052907">
    <property type="term" value="F:23S rRNA (adenine(1618)-N(6))-methyltransferase activity"/>
    <property type="evidence" value="ECO:0007669"/>
    <property type="project" value="UniProtKB-EC"/>
</dbReference>
<dbReference type="GO" id="GO:0070475">
    <property type="term" value="P:rRNA base methylation"/>
    <property type="evidence" value="ECO:0007669"/>
    <property type="project" value="TreeGrafter"/>
</dbReference>
<dbReference type="FunFam" id="3.40.50.150:FF:000045">
    <property type="entry name" value="Ribosomal RNA large subunit methyltransferase F"/>
    <property type="match status" value="1"/>
</dbReference>
<dbReference type="Gene3D" id="3.40.50.150">
    <property type="entry name" value="Vaccinia Virus protein VP39"/>
    <property type="match status" value="1"/>
</dbReference>
<dbReference type="HAMAP" id="MF_01848">
    <property type="entry name" value="23SrRNA_methyltr_F"/>
    <property type="match status" value="1"/>
</dbReference>
<dbReference type="InterPro" id="IPR010286">
    <property type="entry name" value="METTL16/RlmF"/>
</dbReference>
<dbReference type="InterPro" id="IPR016909">
    <property type="entry name" value="rRNA_lsu_MeTfrase_F"/>
</dbReference>
<dbReference type="InterPro" id="IPR029063">
    <property type="entry name" value="SAM-dependent_MTases_sf"/>
</dbReference>
<dbReference type="NCBIfam" id="NF008725">
    <property type="entry name" value="PRK11727.1"/>
    <property type="match status" value="1"/>
</dbReference>
<dbReference type="PANTHER" id="PTHR13393:SF0">
    <property type="entry name" value="RNA N6-ADENOSINE-METHYLTRANSFERASE METTL16"/>
    <property type="match status" value="1"/>
</dbReference>
<dbReference type="PANTHER" id="PTHR13393">
    <property type="entry name" value="SAM-DEPENDENT METHYLTRANSFERASE"/>
    <property type="match status" value="1"/>
</dbReference>
<dbReference type="Pfam" id="PF05971">
    <property type="entry name" value="Methyltransf_10"/>
    <property type="match status" value="1"/>
</dbReference>
<dbReference type="PIRSF" id="PIRSF029038">
    <property type="entry name" value="Mtase_YbiN_prd"/>
    <property type="match status" value="1"/>
</dbReference>
<dbReference type="SUPFAM" id="SSF53335">
    <property type="entry name" value="S-adenosyl-L-methionine-dependent methyltransferases"/>
    <property type="match status" value="1"/>
</dbReference>
<sequence>MSAQKPGLHPRNRHHSRYDLATLCQVNPELRQFLTLTPAGEQSVDFANPLAVKALNKALLAHFYAVANWDIPDGFLCPPVPGRADHIHHLADLLAEASGTIPANASILDIGVGANCIYPLIGVHEYGWRFTGSETSSQALSSAQAIISANPGLNRAIRLRRQKESGAIFNGIIHKNEQYDATLCNPPFHDSAAAARAGSERKRRNLGLNKDDALNFGGQQQELWCEGGEVTFIKKMIEESKGFAKQMMWFTSLVSRGENLPPLYRALTDVGAVKVVKKEMAQGQKQSRFIAWTFMNDEQRRRFVNRQR</sequence>
<gene>
    <name evidence="1" type="primary">rlmF</name>
    <name type="ordered locus">SDY_0790</name>
</gene>
<protein>
    <recommendedName>
        <fullName evidence="1">Ribosomal RNA large subunit methyltransferase F</fullName>
        <ecNumber evidence="1">2.1.1.181</ecNumber>
    </recommendedName>
    <alternativeName>
        <fullName evidence="1">23S rRNA mA1618 methyltransferase</fullName>
    </alternativeName>
    <alternativeName>
        <fullName evidence="1">rRNA adenine N-6-methyltransferase</fullName>
    </alternativeName>
</protein>